<accession>Q081H3</accession>
<gene>
    <name evidence="1" type="primary">metG</name>
    <name type="ordered locus">Sfri_2246</name>
</gene>
<comment type="function">
    <text evidence="1">Is required not only for elongation of protein synthesis but also for the initiation of all mRNA translation through initiator tRNA(fMet) aminoacylation.</text>
</comment>
<comment type="catalytic activity">
    <reaction evidence="1">
        <text>tRNA(Met) + L-methionine + ATP = L-methionyl-tRNA(Met) + AMP + diphosphate</text>
        <dbReference type="Rhea" id="RHEA:13481"/>
        <dbReference type="Rhea" id="RHEA-COMP:9667"/>
        <dbReference type="Rhea" id="RHEA-COMP:9698"/>
        <dbReference type="ChEBI" id="CHEBI:30616"/>
        <dbReference type="ChEBI" id="CHEBI:33019"/>
        <dbReference type="ChEBI" id="CHEBI:57844"/>
        <dbReference type="ChEBI" id="CHEBI:78442"/>
        <dbReference type="ChEBI" id="CHEBI:78530"/>
        <dbReference type="ChEBI" id="CHEBI:456215"/>
        <dbReference type="EC" id="6.1.1.10"/>
    </reaction>
</comment>
<comment type="cofactor">
    <cofactor evidence="1">
        <name>Zn(2+)</name>
        <dbReference type="ChEBI" id="CHEBI:29105"/>
    </cofactor>
    <text evidence="1">Binds 1 zinc ion per subunit.</text>
</comment>
<comment type="subunit">
    <text evidence="1">Homodimer.</text>
</comment>
<comment type="subcellular location">
    <subcellularLocation>
        <location evidence="1">Cytoplasm</location>
    </subcellularLocation>
</comment>
<comment type="similarity">
    <text evidence="1">Belongs to the class-I aminoacyl-tRNA synthetase family. MetG type 1 subfamily.</text>
</comment>
<keyword id="KW-0030">Aminoacyl-tRNA synthetase</keyword>
<keyword id="KW-0067">ATP-binding</keyword>
<keyword id="KW-0963">Cytoplasm</keyword>
<keyword id="KW-0436">Ligase</keyword>
<keyword id="KW-0479">Metal-binding</keyword>
<keyword id="KW-0547">Nucleotide-binding</keyword>
<keyword id="KW-0648">Protein biosynthesis</keyword>
<keyword id="KW-1185">Reference proteome</keyword>
<keyword id="KW-0694">RNA-binding</keyword>
<keyword id="KW-0820">tRNA-binding</keyword>
<keyword id="KW-0862">Zinc</keyword>
<feature type="chain" id="PRO_0000331906" description="Methionine--tRNA ligase">
    <location>
        <begin position="1"/>
        <end position="683"/>
    </location>
</feature>
<feature type="domain" description="tRNA-binding" evidence="1">
    <location>
        <begin position="582"/>
        <end position="683"/>
    </location>
</feature>
<feature type="short sequence motif" description="'HIGH' region">
    <location>
        <begin position="15"/>
        <end position="25"/>
    </location>
</feature>
<feature type="short sequence motif" description="'KMSKS' region">
    <location>
        <begin position="332"/>
        <end position="336"/>
    </location>
</feature>
<feature type="binding site" evidence="1">
    <location>
        <position position="146"/>
    </location>
    <ligand>
        <name>Zn(2+)</name>
        <dbReference type="ChEBI" id="CHEBI:29105"/>
    </ligand>
</feature>
<feature type="binding site" evidence="1">
    <location>
        <position position="149"/>
    </location>
    <ligand>
        <name>Zn(2+)</name>
        <dbReference type="ChEBI" id="CHEBI:29105"/>
    </ligand>
</feature>
<feature type="binding site" evidence="1">
    <location>
        <position position="159"/>
    </location>
    <ligand>
        <name>Zn(2+)</name>
        <dbReference type="ChEBI" id="CHEBI:29105"/>
    </ligand>
</feature>
<feature type="binding site" evidence="1">
    <location>
        <position position="162"/>
    </location>
    <ligand>
        <name>Zn(2+)</name>
        <dbReference type="ChEBI" id="CHEBI:29105"/>
    </ligand>
</feature>
<feature type="binding site" evidence="1">
    <location>
        <position position="335"/>
    </location>
    <ligand>
        <name>ATP</name>
        <dbReference type="ChEBI" id="CHEBI:30616"/>
    </ligand>
</feature>
<organism>
    <name type="scientific">Shewanella frigidimarina (strain NCIMB 400)</name>
    <dbReference type="NCBI Taxonomy" id="318167"/>
    <lineage>
        <taxon>Bacteria</taxon>
        <taxon>Pseudomonadati</taxon>
        <taxon>Pseudomonadota</taxon>
        <taxon>Gammaproteobacteria</taxon>
        <taxon>Alteromonadales</taxon>
        <taxon>Shewanellaceae</taxon>
        <taxon>Shewanella</taxon>
    </lineage>
</organism>
<proteinExistence type="inferred from homology"/>
<evidence type="ECO:0000255" key="1">
    <source>
        <dbReference type="HAMAP-Rule" id="MF_00098"/>
    </source>
</evidence>
<name>SYM_SHEFN</name>
<sequence>MTKSQRKILVTSALPYANGPIHLGHMLEYIQTDIWSRFQKLRGHECHYICADDAHGTPIMLKAQQMGITPEEMIAQVQKEHQQDFADFNIQFDNFHSTHSEENRILASDIYLKLRDGGYIKTKTISQLYDPEKLMFLPDRFVKGTCPKCKSEDQYGDNCDNCGATYSTTDLINPKSAVSGATPIMKDTEHFFFDLPAFEGMLKEWIQSGSLQQEMANKLNEWFEQGLKQWDISRDAPYFGFEIPDAPGKFFYVWLDAPIGYMGSFKNLCDKRDDLNFDDFWSLDSTAEVYHFIGKDIVYFHSLFWPAMLEGAGIRKPTSVYAHGYVTVNGSKMSKSKGTFIKARTYLDNLDPEYLRYYYAAKLNSRIDDLDLNLEDFAQRVNSDLVGKLVNLASRTAGFISKRFDGKLAKVTDSSLTDIFLAKSEVIAELYETREFGKAMREIMALADIANAYVADAAPWQLVKQDDKQDEAHQVCSNALNLFRILVTYLKPVLPKLAENVEGFLQLTLTWDNLGQDLAGHEIATFKALMQRIEPKSIEAIIDASKENLQATNTDAPKTEAPTQAVNQLELDPISPEISFEDFAKIDLRIARISKAEHIEKANKLLRLELDLGGDTKQVFAGIKSAYAPEDLVGKLTVMVANLAPRTMKFGDSEGMVLAAGPGGKDLFILEPHEGALPGMRVK</sequence>
<reference key="1">
    <citation type="submission" date="2006-08" db="EMBL/GenBank/DDBJ databases">
        <title>Complete sequence of Shewanella frigidimarina NCIMB 400.</title>
        <authorList>
            <consortium name="US DOE Joint Genome Institute"/>
            <person name="Copeland A."/>
            <person name="Lucas S."/>
            <person name="Lapidus A."/>
            <person name="Barry K."/>
            <person name="Detter J.C."/>
            <person name="Glavina del Rio T."/>
            <person name="Hammon N."/>
            <person name="Israni S."/>
            <person name="Dalin E."/>
            <person name="Tice H."/>
            <person name="Pitluck S."/>
            <person name="Fredrickson J.K."/>
            <person name="Kolker E."/>
            <person name="McCuel L.A."/>
            <person name="DiChristina T."/>
            <person name="Nealson K.H."/>
            <person name="Newman D."/>
            <person name="Tiedje J.M."/>
            <person name="Zhou J."/>
            <person name="Romine M.F."/>
            <person name="Culley D.E."/>
            <person name="Serres M."/>
            <person name="Chertkov O."/>
            <person name="Brettin T."/>
            <person name="Bruce D."/>
            <person name="Han C."/>
            <person name="Tapia R."/>
            <person name="Gilna P."/>
            <person name="Schmutz J."/>
            <person name="Larimer F."/>
            <person name="Land M."/>
            <person name="Hauser L."/>
            <person name="Kyrpides N."/>
            <person name="Mikhailova N."/>
            <person name="Richardson P."/>
        </authorList>
    </citation>
    <scope>NUCLEOTIDE SEQUENCE [LARGE SCALE GENOMIC DNA]</scope>
    <source>
        <strain>NCIMB 400</strain>
    </source>
</reference>
<protein>
    <recommendedName>
        <fullName evidence="1">Methionine--tRNA ligase</fullName>
        <ecNumber evidence="1">6.1.1.10</ecNumber>
    </recommendedName>
    <alternativeName>
        <fullName evidence="1">Methionyl-tRNA synthetase</fullName>
        <shortName evidence="1">MetRS</shortName>
    </alternativeName>
</protein>
<dbReference type="EC" id="6.1.1.10" evidence="1"/>
<dbReference type="EMBL" id="CP000447">
    <property type="protein sequence ID" value="ABI72092.1"/>
    <property type="molecule type" value="Genomic_DNA"/>
</dbReference>
<dbReference type="RefSeq" id="WP_011637702.1">
    <property type="nucleotide sequence ID" value="NC_008345.1"/>
</dbReference>
<dbReference type="SMR" id="Q081H3"/>
<dbReference type="STRING" id="318167.Sfri_2246"/>
<dbReference type="KEGG" id="sfr:Sfri_2246"/>
<dbReference type="eggNOG" id="COG0073">
    <property type="taxonomic scope" value="Bacteria"/>
</dbReference>
<dbReference type="eggNOG" id="COG0143">
    <property type="taxonomic scope" value="Bacteria"/>
</dbReference>
<dbReference type="HOGENOM" id="CLU_009710_7_0_6"/>
<dbReference type="OrthoDB" id="9810191at2"/>
<dbReference type="Proteomes" id="UP000000684">
    <property type="component" value="Chromosome"/>
</dbReference>
<dbReference type="GO" id="GO:0005829">
    <property type="term" value="C:cytosol"/>
    <property type="evidence" value="ECO:0007669"/>
    <property type="project" value="TreeGrafter"/>
</dbReference>
<dbReference type="GO" id="GO:0005524">
    <property type="term" value="F:ATP binding"/>
    <property type="evidence" value="ECO:0007669"/>
    <property type="project" value="UniProtKB-UniRule"/>
</dbReference>
<dbReference type="GO" id="GO:0046872">
    <property type="term" value="F:metal ion binding"/>
    <property type="evidence" value="ECO:0007669"/>
    <property type="project" value="UniProtKB-KW"/>
</dbReference>
<dbReference type="GO" id="GO:0004825">
    <property type="term" value="F:methionine-tRNA ligase activity"/>
    <property type="evidence" value="ECO:0007669"/>
    <property type="project" value="UniProtKB-UniRule"/>
</dbReference>
<dbReference type="GO" id="GO:0000049">
    <property type="term" value="F:tRNA binding"/>
    <property type="evidence" value="ECO:0007669"/>
    <property type="project" value="UniProtKB-KW"/>
</dbReference>
<dbReference type="GO" id="GO:0006431">
    <property type="term" value="P:methionyl-tRNA aminoacylation"/>
    <property type="evidence" value="ECO:0007669"/>
    <property type="project" value="UniProtKB-UniRule"/>
</dbReference>
<dbReference type="CDD" id="cd07957">
    <property type="entry name" value="Anticodon_Ia_Met"/>
    <property type="match status" value="1"/>
</dbReference>
<dbReference type="CDD" id="cd00814">
    <property type="entry name" value="MetRS_core"/>
    <property type="match status" value="1"/>
</dbReference>
<dbReference type="CDD" id="cd02800">
    <property type="entry name" value="tRNA_bind_EcMetRS_like"/>
    <property type="match status" value="1"/>
</dbReference>
<dbReference type="FunFam" id="1.10.730.10:FF:000005">
    <property type="entry name" value="Methionine--tRNA ligase"/>
    <property type="match status" value="1"/>
</dbReference>
<dbReference type="FunFam" id="2.20.28.20:FF:000001">
    <property type="entry name" value="Methionine--tRNA ligase"/>
    <property type="match status" value="1"/>
</dbReference>
<dbReference type="FunFam" id="2.40.50.140:FF:000042">
    <property type="entry name" value="Methionine--tRNA ligase"/>
    <property type="match status" value="1"/>
</dbReference>
<dbReference type="Gene3D" id="3.40.50.620">
    <property type="entry name" value="HUPs"/>
    <property type="match status" value="1"/>
</dbReference>
<dbReference type="Gene3D" id="1.10.730.10">
    <property type="entry name" value="Isoleucyl-tRNA Synthetase, Domain 1"/>
    <property type="match status" value="1"/>
</dbReference>
<dbReference type="Gene3D" id="2.20.28.20">
    <property type="entry name" value="Methionyl-tRNA synthetase, Zn-domain"/>
    <property type="match status" value="1"/>
</dbReference>
<dbReference type="Gene3D" id="2.40.50.140">
    <property type="entry name" value="Nucleic acid-binding proteins"/>
    <property type="match status" value="1"/>
</dbReference>
<dbReference type="HAMAP" id="MF_00098">
    <property type="entry name" value="Met_tRNA_synth_type1"/>
    <property type="match status" value="1"/>
</dbReference>
<dbReference type="InterPro" id="IPR001412">
    <property type="entry name" value="aa-tRNA-synth_I_CS"/>
</dbReference>
<dbReference type="InterPro" id="IPR041872">
    <property type="entry name" value="Anticodon_Met"/>
</dbReference>
<dbReference type="InterPro" id="IPR004495">
    <property type="entry name" value="Met-tRNA-synth_bsu_C"/>
</dbReference>
<dbReference type="InterPro" id="IPR023458">
    <property type="entry name" value="Met-tRNA_ligase_1"/>
</dbReference>
<dbReference type="InterPro" id="IPR014758">
    <property type="entry name" value="Met-tRNA_synth"/>
</dbReference>
<dbReference type="InterPro" id="IPR015413">
    <property type="entry name" value="Methionyl/Leucyl_tRNA_Synth"/>
</dbReference>
<dbReference type="InterPro" id="IPR033911">
    <property type="entry name" value="MetRS_core"/>
</dbReference>
<dbReference type="InterPro" id="IPR029038">
    <property type="entry name" value="MetRS_Zn"/>
</dbReference>
<dbReference type="InterPro" id="IPR012340">
    <property type="entry name" value="NA-bd_OB-fold"/>
</dbReference>
<dbReference type="InterPro" id="IPR014729">
    <property type="entry name" value="Rossmann-like_a/b/a_fold"/>
</dbReference>
<dbReference type="InterPro" id="IPR002547">
    <property type="entry name" value="tRNA-bd_dom"/>
</dbReference>
<dbReference type="InterPro" id="IPR009080">
    <property type="entry name" value="tRNAsynth_Ia_anticodon-bd"/>
</dbReference>
<dbReference type="NCBIfam" id="TIGR00398">
    <property type="entry name" value="metG"/>
    <property type="match status" value="1"/>
</dbReference>
<dbReference type="NCBIfam" id="TIGR00399">
    <property type="entry name" value="metG_C_term"/>
    <property type="match status" value="1"/>
</dbReference>
<dbReference type="NCBIfam" id="NF001100">
    <property type="entry name" value="PRK00133.1"/>
    <property type="match status" value="1"/>
</dbReference>
<dbReference type="PANTHER" id="PTHR45765">
    <property type="entry name" value="METHIONINE--TRNA LIGASE"/>
    <property type="match status" value="1"/>
</dbReference>
<dbReference type="PANTHER" id="PTHR45765:SF1">
    <property type="entry name" value="METHIONINE--TRNA LIGASE, CYTOPLASMIC"/>
    <property type="match status" value="1"/>
</dbReference>
<dbReference type="Pfam" id="PF19303">
    <property type="entry name" value="Anticodon_3"/>
    <property type="match status" value="1"/>
</dbReference>
<dbReference type="Pfam" id="PF09334">
    <property type="entry name" value="tRNA-synt_1g"/>
    <property type="match status" value="1"/>
</dbReference>
<dbReference type="Pfam" id="PF01588">
    <property type="entry name" value="tRNA_bind"/>
    <property type="match status" value="1"/>
</dbReference>
<dbReference type="PRINTS" id="PR01041">
    <property type="entry name" value="TRNASYNTHMET"/>
</dbReference>
<dbReference type="SUPFAM" id="SSF47323">
    <property type="entry name" value="Anticodon-binding domain of a subclass of class I aminoacyl-tRNA synthetases"/>
    <property type="match status" value="1"/>
</dbReference>
<dbReference type="SUPFAM" id="SSF57770">
    <property type="entry name" value="Methionyl-tRNA synthetase (MetRS), Zn-domain"/>
    <property type="match status" value="1"/>
</dbReference>
<dbReference type="SUPFAM" id="SSF50249">
    <property type="entry name" value="Nucleic acid-binding proteins"/>
    <property type="match status" value="1"/>
</dbReference>
<dbReference type="SUPFAM" id="SSF52374">
    <property type="entry name" value="Nucleotidylyl transferase"/>
    <property type="match status" value="1"/>
</dbReference>
<dbReference type="PROSITE" id="PS00178">
    <property type="entry name" value="AA_TRNA_LIGASE_I"/>
    <property type="match status" value="1"/>
</dbReference>
<dbReference type="PROSITE" id="PS50886">
    <property type="entry name" value="TRBD"/>
    <property type="match status" value="1"/>
</dbReference>